<reference key="1">
    <citation type="journal article" date="2005" name="PLoS Biol.">
        <title>The genomes of Oryza sativa: a history of duplications.</title>
        <authorList>
            <person name="Yu J."/>
            <person name="Wang J."/>
            <person name="Lin W."/>
            <person name="Li S."/>
            <person name="Li H."/>
            <person name="Zhou J."/>
            <person name="Ni P."/>
            <person name="Dong W."/>
            <person name="Hu S."/>
            <person name="Zeng C."/>
            <person name="Zhang J."/>
            <person name="Zhang Y."/>
            <person name="Li R."/>
            <person name="Xu Z."/>
            <person name="Li S."/>
            <person name="Li X."/>
            <person name="Zheng H."/>
            <person name="Cong L."/>
            <person name="Lin L."/>
            <person name="Yin J."/>
            <person name="Geng J."/>
            <person name="Li G."/>
            <person name="Shi J."/>
            <person name="Liu J."/>
            <person name="Lv H."/>
            <person name="Li J."/>
            <person name="Wang J."/>
            <person name="Deng Y."/>
            <person name="Ran L."/>
            <person name="Shi X."/>
            <person name="Wang X."/>
            <person name="Wu Q."/>
            <person name="Li C."/>
            <person name="Ren X."/>
            <person name="Wang J."/>
            <person name="Wang X."/>
            <person name="Li D."/>
            <person name="Liu D."/>
            <person name="Zhang X."/>
            <person name="Ji Z."/>
            <person name="Zhao W."/>
            <person name="Sun Y."/>
            <person name="Zhang Z."/>
            <person name="Bao J."/>
            <person name="Han Y."/>
            <person name="Dong L."/>
            <person name="Ji J."/>
            <person name="Chen P."/>
            <person name="Wu S."/>
            <person name="Liu J."/>
            <person name="Xiao Y."/>
            <person name="Bu D."/>
            <person name="Tan J."/>
            <person name="Yang L."/>
            <person name="Ye C."/>
            <person name="Zhang J."/>
            <person name="Xu J."/>
            <person name="Zhou Y."/>
            <person name="Yu Y."/>
            <person name="Zhang B."/>
            <person name="Zhuang S."/>
            <person name="Wei H."/>
            <person name="Liu B."/>
            <person name="Lei M."/>
            <person name="Yu H."/>
            <person name="Li Y."/>
            <person name="Xu H."/>
            <person name="Wei S."/>
            <person name="He X."/>
            <person name="Fang L."/>
            <person name="Zhang Z."/>
            <person name="Zhang Y."/>
            <person name="Huang X."/>
            <person name="Su Z."/>
            <person name="Tong W."/>
            <person name="Li J."/>
            <person name="Tong Z."/>
            <person name="Li S."/>
            <person name="Ye J."/>
            <person name="Wang L."/>
            <person name="Fang L."/>
            <person name="Lei T."/>
            <person name="Chen C.-S."/>
            <person name="Chen H.-C."/>
            <person name="Xu Z."/>
            <person name="Li H."/>
            <person name="Huang H."/>
            <person name="Zhang F."/>
            <person name="Xu H."/>
            <person name="Li N."/>
            <person name="Zhao C."/>
            <person name="Li S."/>
            <person name="Dong L."/>
            <person name="Huang Y."/>
            <person name="Li L."/>
            <person name="Xi Y."/>
            <person name="Qi Q."/>
            <person name="Li W."/>
            <person name="Zhang B."/>
            <person name="Hu W."/>
            <person name="Zhang Y."/>
            <person name="Tian X."/>
            <person name="Jiao Y."/>
            <person name="Liang X."/>
            <person name="Jin J."/>
            <person name="Gao L."/>
            <person name="Zheng W."/>
            <person name="Hao B."/>
            <person name="Liu S.-M."/>
            <person name="Wang W."/>
            <person name="Yuan L."/>
            <person name="Cao M."/>
            <person name="McDermott J."/>
            <person name="Samudrala R."/>
            <person name="Wang J."/>
            <person name="Wong G.K.-S."/>
            <person name="Yang H."/>
        </authorList>
    </citation>
    <scope>NUCLEOTIDE SEQUENCE [LARGE SCALE GENOMIC DNA]</scope>
    <source>
        <strain>cv. 93-11</strain>
    </source>
</reference>
<evidence type="ECO:0000255" key="1"/>
<evidence type="ECO:0000255" key="2">
    <source>
        <dbReference type="PROSITE-ProRule" id="PRU00714"/>
    </source>
</evidence>
<evidence type="ECO:0000256" key="3">
    <source>
        <dbReference type="SAM" id="MobiDB-lite"/>
    </source>
</evidence>
<evidence type="ECO:0000305" key="4"/>
<proteinExistence type="inferred from homology"/>
<sequence>MVNFGKKLMADQIPEWKGYYINYKLMKKKVKQYGQQVQQGEKDRRRVLKDFSKMLDDQIEKIVLFLLEQQGALASRIEKLGKQRAILAEQPDISAIAELREAYREVGLDLIKLLKFVDLNATGIRKILKKFDKRFGYRFTDYYVTSRSNHPYSQLQQVFKHVGVGAVVGALSRNLADLQERQGSYLSIYDQPSTALKDPIIDMINSSVDKLTRSTNFLRFLGQHALIVGEESPSTAEEEEIEDQKYHFMSLMLNLVNTFLYMVNTYIIVPTADDYSVSLGAASTVCGVVIGSMAVAQIFSSVYFSAWSNKSYFRPLIFSSIVLFLGNVCYAMAYDMKSLTVLIIGRLLCGMGSARAVNRRYISDCVPARIRMQASAGFVSASALGMACGPALAGLLQWKFKIYMVTFNQSTLPGWVMAVAWLLYLVWLWISFKEPNRATEVNGTQQNPASVQRADIEQLENGLAQPLLRDSSKKDEDDDEEVDDSEEGTHDSRKPATSIGSAYRLLTPSVKVQLLIYFMLKYAMEILLSESSVITNHYFNWNTSAVAIFLAILGLTVLPVNAVVGTYISNMFEDRQLLMVSQITLLVGIIFSFKITSTYSVVQYVVSALVTFVSAEVLEGVNLSLLSSVMSSRLSRGTYNGGLLSTEAGTLARVVADCTITAAGYLGIGKLLNVTLLPSLVICAASIASTFLTYNSLF</sequence>
<protein>
    <recommendedName>
        <fullName>SPX domain-containing membrane protein OsI_21475</fullName>
    </recommendedName>
</protein>
<feature type="chain" id="PRO_0000398574" description="SPX domain-containing membrane protein OsI_21475">
    <location>
        <begin position="1"/>
        <end position="698"/>
    </location>
</feature>
<feature type="transmembrane region" description="Helical" evidence="1">
    <location>
        <begin position="248"/>
        <end position="268"/>
    </location>
</feature>
<feature type="transmembrane region" description="Helical" evidence="1">
    <location>
        <begin position="279"/>
        <end position="299"/>
    </location>
</feature>
<feature type="transmembrane region" description="Helical" evidence="1">
    <location>
        <begin position="316"/>
        <end position="336"/>
    </location>
</feature>
<feature type="transmembrane region" description="Helical" evidence="1">
    <location>
        <begin position="339"/>
        <end position="357"/>
    </location>
</feature>
<feature type="transmembrane region" description="Helical" evidence="1">
    <location>
        <begin position="376"/>
        <end position="396"/>
    </location>
</feature>
<feature type="transmembrane region" description="Helical" evidence="1">
    <location>
        <begin position="412"/>
        <end position="432"/>
    </location>
</feature>
<feature type="transmembrane region" description="Helical" evidence="1">
    <location>
        <begin position="514"/>
        <end position="534"/>
    </location>
</feature>
<feature type="transmembrane region" description="Helical" evidence="1">
    <location>
        <begin position="545"/>
        <end position="565"/>
    </location>
</feature>
<feature type="transmembrane region" description="Helical" evidence="1">
    <location>
        <begin position="577"/>
        <end position="597"/>
    </location>
</feature>
<feature type="transmembrane region" description="Helical" evidence="1">
    <location>
        <begin position="605"/>
        <end position="625"/>
    </location>
</feature>
<feature type="transmembrane region" description="Helical" evidence="1">
    <location>
        <begin position="671"/>
        <end position="691"/>
    </location>
</feature>
<feature type="domain" description="SPX" evidence="2">
    <location>
        <begin position="2"/>
        <end position="145"/>
    </location>
</feature>
<feature type="region of interest" description="Disordered" evidence="3">
    <location>
        <begin position="467"/>
        <end position="495"/>
    </location>
</feature>
<feature type="compositionally biased region" description="Acidic residues" evidence="3">
    <location>
        <begin position="476"/>
        <end position="486"/>
    </location>
</feature>
<organism>
    <name type="scientific">Oryza sativa subsp. indica</name>
    <name type="common">Rice</name>
    <dbReference type="NCBI Taxonomy" id="39946"/>
    <lineage>
        <taxon>Eukaryota</taxon>
        <taxon>Viridiplantae</taxon>
        <taxon>Streptophyta</taxon>
        <taxon>Embryophyta</taxon>
        <taxon>Tracheophyta</taxon>
        <taxon>Spermatophyta</taxon>
        <taxon>Magnoliopsida</taxon>
        <taxon>Liliopsida</taxon>
        <taxon>Poales</taxon>
        <taxon>Poaceae</taxon>
        <taxon>BOP clade</taxon>
        <taxon>Oryzoideae</taxon>
        <taxon>Oryzeae</taxon>
        <taxon>Oryzinae</taxon>
        <taxon>Oryza</taxon>
        <taxon>Oryza sativa</taxon>
    </lineage>
</organism>
<gene>
    <name type="ORF">OsI_21475</name>
</gene>
<comment type="subcellular location">
    <subcellularLocation>
        <location evidence="4">Membrane</location>
        <topology evidence="4">Multi-pass membrane protein</topology>
    </subcellularLocation>
</comment>
<comment type="similarity">
    <text evidence="4">Belongs to the major facilitator superfamily.</text>
</comment>
<keyword id="KW-0472">Membrane</keyword>
<keyword id="KW-1185">Reference proteome</keyword>
<keyword id="KW-0812">Transmembrane</keyword>
<keyword id="KW-1133">Transmembrane helix</keyword>
<dbReference type="EMBL" id="CM000131">
    <property type="protein sequence ID" value="EAY99506.1"/>
    <property type="molecule type" value="Genomic_DNA"/>
</dbReference>
<dbReference type="STRING" id="39946.A2Y8U6"/>
<dbReference type="iPTMnet" id="A2Y8U6"/>
<dbReference type="EnsemblPlants" id="BGIOSGA022231-TA">
    <property type="protein sequence ID" value="BGIOSGA022231-PA"/>
    <property type="gene ID" value="BGIOSGA022231"/>
</dbReference>
<dbReference type="EnsemblPlants" id="OsGoSa_06g0001920.02">
    <property type="protein sequence ID" value="OsGoSa_06g0001920.02"/>
    <property type="gene ID" value="OsGoSa_06g0001920"/>
</dbReference>
<dbReference type="EnsemblPlants" id="OsIR64_06g0001970.01">
    <property type="protein sequence ID" value="OsIR64_06g0001970.01"/>
    <property type="gene ID" value="OsIR64_06g0001970"/>
</dbReference>
<dbReference type="EnsemblPlants" id="OsKYG_06g0001930.02">
    <property type="protein sequence ID" value="OsKYG_06g0001930.02"/>
    <property type="gene ID" value="OsKYG_06g0001930"/>
</dbReference>
<dbReference type="EnsemblPlants" id="OsLaMu_06g0001790.02">
    <property type="protein sequence ID" value="OsLaMu_06g0001790.02"/>
    <property type="gene ID" value="OsLaMu_06g0001790"/>
</dbReference>
<dbReference type="EnsemblPlants" id="OsLima_06g0002060.01">
    <property type="protein sequence ID" value="OsLima_06g0002060.01"/>
    <property type="gene ID" value="OsLima_06g0002060"/>
</dbReference>
<dbReference type="EnsemblPlants" id="OsMH63_06G001930_03">
    <property type="protein sequence ID" value="OsMH63_06G001930_03"/>
    <property type="gene ID" value="OsMH63_06G001930"/>
</dbReference>
<dbReference type="EnsemblPlants" id="OsPr106_06g0001980.01">
    <property type="protein sequence ID" value="OsPr106_06g0001980.01"/>
    <property type="gene ID" value="OsPr106_06g0001980"/>
</dbReference>
<dbReference type="EnsemblPlants" id="OsZS97_06G001920_02">
    <property type="protein sequence ID" value="OsZS97_06G001920_02"/>
    <property type="gene ID" value="OsZS97_06G001920"/>
</dbReference>
<dbReference type="Gramene" id="BGIOSGA022231-TA">
    <property type="protein sequence ID" value="BGIOSGA022231-PA"/>
    <property type="gene ID" value="BGIOSGA022231"/>
</dbReference>
<dbReference type="Gramene" id="OsGoSa_06g0001920.02">
    <property type="protein sequence ID" value="OsGoSa_06g0001920.02"/>
    <property type="gene ID" value="OsGoSa_06g0001920"/>
</dbReference>
<dbReference type="Gramene" id="OsIR64_06g0001970.01">
    <property type="protein sequence ID" value="OsIR64_06g0001970.01"/>
    <property type="gene ID" value="OsIR64_06g0001970"/>
</dbReference>
<dbReference type="Gramene" id="OsKYG_06g0001930.02">
    <property type="protein sequence ID" value="OsKYG_06g0001930.02"/>
    <property type="gene ID" value="OsKYG_06g0001930"/>
</dbReference>
<dbReference type="Gramene" id="OsLaMu_06g0001790.02">
    <property type="protein sequence ID" value="OsLaMu_06g0001790.02"/>
    <property type="gene ID" value="OsLaMu_06g0001790"/>
</dbReference>
<dbReference type="Gramene" id="OsLima_06g0002060.01">
    <property type="protein sequence ID" value="OsLima_06g0002060.01"/>
    <property type="gene ID" value="OsLima_06g0002060"/>
</dbReference>
<dbReference type="Gramene" id="OsMH63_06G001930_03">
    <property type="protein sequence ID" value="OsMH63_06G001930_03"/>
    <property type="gene ID" value="OsMH63_06G001930"/>
</dbReference>
<dbReference type="Gramene" id="OsPr106_06g0001980.01">
    <property type="protein sequence ID" value="OsPr106_06g0001980.01"/>
    <property type="gene ID" value="OsPr106_06g0001980"/>
</dbReference>
<dbReference type="Gramene" id="OsZS97_06G001920_02">
    <property type="protein sequence ID" value="OsZS97_06G001920_02"/>
    <property type="gene ID" value="OsZS97_06G001920"/>
</dbReference>
<dbReference type="HOGENOM" id="CLU_025236_1_0_1"/>
<dbReference type="OMA" id="MTNYYIV"/>
<dbReference type="OrthoDB" id="5588846at2759"/>
<dbReference type="Proteomes" id="UP000007015">
    <property type="component" value="Chromosome 6"/>
</dbReference>
<dbReference type="GO" id="GO:0016020">
    <property type="term" value="C:membrane"/>
    <property type="evidence" value="ECO:0007669"/>
    <property type="project" value="UniProtKB-SubCell"/>
</dbReference>
<dbReference type="GO" id="GO:0022857">
    <property type="term" value="F:transmembrane transporter activity"/>
    <property type="evidence" value="ECO:0007669"/>
    <property type="project" value="InterPro"/>
</dbReference>
<dbReference type="CDD" id="cd14479">
    <property type="entry name" value="SPX-MFS_plant"/>
    <property type="match status" value="1"/>
</dbReference>
<dbReference type="Gene3D" id="1.20.1250.20">
    <property type="entry name" value="MFS general substrate transporter like domains"/>
    <property type="match status" value="1"/>
</dbReference>
<dbReference type="InterPro" id="IPR011701">
    <property type="entry name" value="MFS"/>
</dbReference>
<dbReference type="InterPro" id="IPR051068">
    <property type="entry name" value="MFS_Domain-Containing_Protein"/>
</dbReference>
<dbReference type="InterPro" id="IPR036259">
    <property type="entry name" value="MFS_trans_sf"/>
</dbReference>
<dbReference type="InterPro" id="IPR004331">
    <property type="entry name" value="SPX_dom"/>
</dbReference>
<dbReference type="InterPro" id="IPR045264">
    <property type="entry name" value="SPXM_SPX_plant"/>
</dbReference>
<dbReference type="PANTHER" id="PTHR23510">
    <property type="entry name" value="INNER MEMBRANE TRANSPORT PROTEIN YAJR"/>
    <property type="match status" value="1"/>
</dbReference>
<dbReference type="PANTHER" id="PTHR23510:SF78">
    <property type="entry name" value="SPX DOMAIN-CONTAINING MEMBRANE PROTEIN OS06G0129400"/>
    <property type="match status" value="1"/>
</dbReference>
<dbReference type="Pfam" id="PF07690">
    <property type="entry name" value="MFS_1"/>
    <property type="match status" value="1"/>
</dbReference>
<dbReference type="Pfam" id="PF03105">
    <property type="entry name" value="SPX"/>
    <property type="match status" value="1"/>
</dbReference>
<dbReference type="SUPFAM" id="SSF103473">
    <property type="entry name" value="MFS general substrate transporter"/>
    <property type="match status" value="1"/>
</dbReference>
<dbReference type="PROSITE" id="PS51382">
    <property type="entry name" value="SPX"/>
    <property type="match status" value="1"/>
</dbReference>
<accession>A2Y8U6</accession>
<name>SPXM3_ORYSI</name>